<proteinExistence type="inferred from homology"/>
<name>GLYA_METS4</name>
<gene>
    <name evidence="1" type="primary">glyA</name>
    <name type="ordered locus">M446_3104</name>
</gene>
<keyword id="KW-0028">Amino-acid biosynthesis</keyword>
<keyword id="KW-0963">Cytoplasm</keyword>
<keyword id="KW-0554">One-carbon metabolism</keyword>
<keyword id="KW-0663">Pyridoxal phosphate</keyword>
<keyword id="KW-0808">Transferase</keyword>
<accession>B0UML5</accession>
<protein>
    <recommendedName>
        <fullName evidence="1">Serine hydroxymethyltransferase</fullName>
        <shortName evidence="1">SHMT</shortName>
        <shortName evidence="1">Serine methylase</shortName>
        <ecNumber evidence="1">2.1.2.1</ecNumber>
    </recommendedName>
</protein>
<organism>
    <name type="scientific">Methylobacterium sp. (strain 4-46)</name>
    <dbReference type="NCBI Taxonomy" id="426117"/>
    <lineage>
        <taxon>Bacteria</taxon>
        <taxon>Pseudomonadati</taxon>
        <taxon>Pseudomonadota</taxon>
        <taxon>Alphaproteobacteria</taxon>
        <taxon>Hyphomicrobiales</taxon>
        <taxon>Methylobacteriaceae</taxon>
        <taxon>Methylobacterium</taxon>
    </lineage>
</organism>
<evidence type="ECO:0000255" key="1">
    <source>
        <dbReference type="HAMAP-Rule" id="MF_00051"/>
    </source>
</evidence>
<reference key="1">
    <citation type="submission" date="2008-02" db="EMBL/GenBank/DDBJ databases">
        <title>Complete sequence of chromosome of Methylobacterium sp. 4-46.</title>
        <authorList>
            <consortium name="US DOE Joint Genome Institute"/>
            <person name="Copeland A."/>
            <person name="Lucas S."/>
            <person name="Lapidus A."/>
            <person name="Glavina del Rio T."/>
            <person name="Dalin E."/>
            <person name="Tice H."/>
            <person name="Bruce D."/>
            <person name="Goodwin L."/>
            <person name="Pitluck S."/>
            <person name="Chertkov O."/>
            <person name="Brettin T."/>
            <person name="Detter J.C."/>
            <person name="Han C."/>
            <person name="Kuske C.R."/>
            <person name="Schmutz J."/>
            <person name="Larimer F."/>
            <person name="Land M."/>
            <person name="Hauser L."/>
            <person name="Kyrpides N."/>
            <person name="Ivanova N."/>
            <person name="Marx C.J."/>
            <person name="Richardson P."/>
        </authorList>
    </citation>
    <scope>NUCLEOTIDE SEQUENCE [LARGE SCALE GENOMIC DNA]</scope>
    <source>
        <strain>4-46</strain>
    </source>
</reference>
<feature type="chain" id="PRO_0000369938" description="Serine hydroxymethyltransferase">
    <location>
        <begin position="1"/>
        <end position="433"/>
    </location>
</feature>
<feature type="binding site" evidence="1">
    <location>
        <position position="132"/>
    </location>
    <ligand>
        <name>(6S)-5,6,7,8-tetrahydrofolate</name>
        <dbReference type="ChEBI" id="CHEBI:57453"/>
    </ligand>
</feature>
<feature type="binding site" evidence="1">
    <location>
        <begin position="136"/>
        <end position="138"/>
    </location>
    <ligand>
        <name>(6S)-5,6,7,8-tetrahydrofolate</name>
        <dbReference type="ChEBI" id="CHEBI:57453"/>
    </ligand>
</feature>
<feature type="site" description="Plays an important role in substrate specificity" evidence="1">
    <location>
        <position position="240"/>
    </location>
</feature>
<feature type="modified residue" description="N6-(pyridoxal phosphate)lysine" evidence="1">
    <location>
        <position position="241"/>
    </location>
</feature>
<sequence>MSAGTAKTPLSNSFFSASLADVDPELSRAVQQELGRQQHEIELIASENIVSRAVLEAQGSVLTNKYAEGYPGRRYYGGCEFVDIAENLAIERAKRLFGCDFANVQPNSGSQANQAVFMATMQPGDTFLGLDLAAGGHLTHGAPPNVSGKWFKPVSYTVRREDQRIDMEQVAKLAEEHKPKVIIAGGSGYPRHWDFAKFREIADSVGAVFFVDMAHFAGLVAGGVHPSPFPHAHVVTTTTHKTLRGPRGGMVLTNDEALAKKINSAVFPGLQGGPLMHVIAGKAVAFGEALSPDFKIYAKQVVENAKALADTIISGGFDITTGGTDNHLMLVDMRPKNLTGKAAEAALSRAGITCNKNGVPFDPQKPTVTSGIRLGTPAATSRGFGVAEFKKVGELIVTVLDGLARAGEAGDGAAEKKVLEEVHALTDRFPIYA</sequence>
<dbReference type="EC" id="2.1.2.1" evidence="1"/>
<dbReference type="EMBL" id="CP000943">
    <property type="protein sequence ID" value="ACA17514.1"/>
    <property type="molecule type" value="Genomic_DNA"/>
</dbReference>
<dbReference type="RefSeq" id="WP_012332914.1">
    <property type="nucleotide sequence ID" value="NC_010511.1"/>
</dbReference>
<dbReference type="SMR" id="B0UML5"/>
<dbReference type="STRING" id="426117.M446_3104"/>
<dbReference type="KEGG" id="met:M446_3104"/>
<dbReference type="eggNOG" id="COG0112">
    <property type="taxonomic scope" value="Bacteria"/>
</dbReference>
<dbReference type="HOGENOM" id="CLU_022477_2_1_5"/>
<dbReference type="UniPathway" id="UPA00193"/>
<dbReference type="UniPathway" id="UPA00288">
    <property type="reaction ID" value="UER01023"/>
</dbReference>
<dbReference type="GO" id="GO:0005829">
    <property type="term" value="C:cytosol"/>
    <property type="evidence" value="ECO:0007669"/>
    <property type="project" value="TreeGrafter"/>
</dbReference>
<dbReference type="GO" id="GO:0004372">
    <property type="term" value="F:glycine hydroxymethyltransferase activity"/>
    <property type="evidence" value="ECO:0007669"/>
    <property type="project" value="UniProtKB-UniRule"/>
</dbReference>
<dbReference type="GO" id="GO:0030170">
    <property type="term" value="F:pyridoxal phosphate binding"/>
    <property type="evidence" value="ECO:0007669"/>
    <property type="project" value="UniProtKB-UniRule"/>
</dbReference>
<dbReference type="GO" id="GO:0019264">
    <property type="term" value="P:glycine biosynthetic process from serine"/>
    <property type="evidence" value="ECO:0007669"/>
    <property type="project" value="UniProtKB-UniRule"/>
</dbReference>
<dbReference type="GO" id="GO:0035999">
    <property type="term" value="P:tetrahydrofolate interconversion"/>
    <property type="evidence" value="ECO:0007669"/>
    <property type="project" value="UniProtKB-UniRule"/>
</dbReference>
<dbReference type="CDD" id="cd00378">
    <property type="entry name" value="SHMT"/>
    <property type="match status" value="1"/>
</dbReference>
<dbReference type="FunFam" id="3.40.640.10:FF:000001">
    <property type="entry name" value="Serine hydroxymethyltransferase"/>
    <property type="match status" value="1"/>
</dbReference>
<dbReference type="Gene3D" id="3.90.1150.10">
    <property type="entry name" value="Aspartate Aminotransferase, domain 1"/>
    <property type="match status" value="1"/>
</dbReference>
<dbReference type="Gene3D" id="3.40.640.10">
    <property type="entry name" value="Type I PLP-dependent aspartate aminotransferase-like (Major domain)"/>
    <property type="match status" value="1"/>
</dbReference>
<dbReference type="HAMAP" id="MF_00051">
    <property type="entry name" value="SHMT"/>
    <property type="match status" value="1"/>
</dbReference>
<dbReference type="InterPro" id="IPR015424">
    <property type="entry name" value="PyrdxlP-dep_Trfase"/>
</dbReference>
<dbReference type="InterPro" id="IPR015421">
    <property type="entry name" value="PyrdxlP-dep_Trfase_major"/>
</dbReference>
<dbReference type="InterPro" id="IPR015422">
    <property type="entry name" value="PyrdxlP-dep_Trfase_small"/>
</dbReference>
<dbReference type="InterPro" id="IPR001085">
    <property type="entry name" value="Ser_HO-MeTrfase"/>
</dbReference>
<dbReference type="InterPro" id="IPR049943">
    <property type="entry name" value="Ser_HO-MeTrfase-like"/>
</dbReference>
<dbReference type="InterPro" id="IPR019798">
    <property type="entry name" value="Ser_HO-MeTrfase_PLP_BS"/>
</dbReference>
<dbReference type="InterPro" id="IPR039429">
    <property type="entry name" value="SHMT-like_dom"/>
</dbReference>
<dbReference type="NCBIfam" id="NF000586">
    <property type="entry name" value="PRK00011.1"/>
    <property type="match status" value="1"/>
</dbReference>
<dbReference type="PANTHER" id="PTHR11680">
    <property type="entry name" value="SERINE HYDROXYMETHYLTRANSFERASE"/>
    <property type="match status" value="1"/>
</dbReference>
<dbReference type="PANTHER" id="PTHR11680:SF35">
    <property type="entry name" value="SERINE HYDROXYMETHYLTRANSFERASE 1"/>
    <property type="match status" value="1"/>
</dbReference>
<dbReference type="Pfam" id="PF00464">
    <property type="entry name" value="SHMT"/>
    <property type="match status" value="1"/>
</dbReference>
<dbReference type="PIRSF" id="PIRSF000412">
    <property type="entry name" value="SHMT"/>
    <property type="match status" value="1"/>
</dbReference>
<dbReference type="SUPFAM" id="SSF53383">
    <property type="entry name" value="PLP-dependent transferases"/>
    <property type="match status" value="1"/>
</dbReference>
<dbReference type="PROSITE" id="PS00096">
    <property type="entry name" value="SHMT"/>
    <property type="match status" value="1"/>
</dbReference>
<comment type="function">
    <text evidence="1">Catalyzes the reversible interconversion of serine and glycine with tetrahydrofolate (THF) serving as the one-carbon carrier. This reaction serves as the major source of one-carbon groups required for the biosynthesis of purines, thymidylate, methionine, and other important biomolecules. Also exhibits THF-independent aldolase activity toward beta-hydroxyamino acids, producing glycine and aldehydes, via a retro-aldol mechanism.</text>
</comment>
<comment type="catalytic activity">
    <reaction evidence="1">
        <text>(6R)-5,10-methylene-5,6,7,8-tetrahydrofolate + glycine + H2O = (6S)-5,6,7,8-tetrahydrofolate + L-serine</text>
        <dbReference type="Rhea" id="RHEA:15481"/>
        <dbReference type="ChEBI" id="CHEBI:15377"/>
        <dbReference type="ChEBI" id="CHEBI:15636"/>
        <dbReference type="ChEBI" id="CHEBI:33384"/>
        <dbReference type="ChEBI" id="CHEBI:57305"/>
        <dbReference type="ChEBI" id="CHEBI:57453"/>
        <dbReference type="EC" id="2.1.2.1"/>
    </reaction>
</comment>
<comment type="cofactor">
    <cofactor evidence="1">
        <name>pyridoxal 5'-phosphate</name>
        <dbReference type="ChEBI" id="CHEBI:597326"/>
    </cofactor>
</comment>
<comment type="pathway">
    <text evidence="1">One-carbon metabolism; tetrahydrofolate interconversion.</text>
</comment>
<comment type="pathway">
    <text evidence="1">Amino-acid biosynthesis; glycine biosynthesis; glycine from L-serine: step 1/1.</text>
</comment>
<comment type="subunit">
    <text evidence="1">Homodimer.</text>
</comment>
<comment type="subcellular location">
    <subcellularLocation>
        <location evidence="1">Cytoplasm</location>
    </subcellularLocation>
</comment>
<comment type="similarity">
    <text evidence="1">Belongs to the SHMT family.</text>
</comment>